<feature type="peptide" id="PRO_0000044899" description="Potassium channel toxin alpha-KTx 1.3">
    <location>
        <begin position="1"/>
        <end position="37"/>
    </location>
</feature>
<feature type="region of interest" description="Interaction with Ca(2+)-activated K(+) channels" evidence="2">
    <location>
        <begin position="26"/>
        <end position="33"/>
    </location>
</feature>
<feature type="site" description="Basic residue of the functional dyad" evidence="1">
    <location>
        <position position="27"/>
    </location>
</feature>
<feature type="site" description="Aromatic residue of the functional dyad" evidence="1">
    <location>
        <position position="36"/>
    </location>
</feature>
<feature type="modified residue" description="Pyrrolidone carboxylic acid" evidence="4">
    <location>
        <position position="1"/>
    </location>
</feature>
<feature type="disulfide bond" evidence="3">
    <location>
        <begin position="7"/>
        <end position="28"/>
    </location>
</feature>
<feature type="disulfide bond" evidence="3">
    <location>
        <begin position="13"/>
        <end position="33"/>
    </location>
</feature>
<feature type="disulfide bond" evidence="3">
    <location>
        <begin position="17"/>
        <end position="35"/>
    </location>
</feature>
<keyword id="KW-1221">Calcium-activated potassium channel impairing toxin</keyword>
<keyword id="KW-0903">Direct protein sequencing</keyword>
<keyword id="KW-1015">Disulfide bond</keyword>
<keyword id="KW-0872">Ion channel impairing toxin</keyword>
<keyword id="KW-0528">Neurotoxin</keyword>
<keyword id="KW-0632">Potassium channel impairing toxin</keyword>
<keyword id="KW-0873">Pyrrolidone carboxylic acid</keyword>
<keyword id="KW-0964">Secreted</keyword>
<keyword id="KW-0800">Toxin</keyword>
<comment type="function">
    <text>Blocks selectively the high conductance calcium-activated (maxi-K) potassium channels (KCa1.1/KCNMA1).</text>
</comment>
<comment type="subcellular location">
    <subcellularLocation>
        <location>Secreted</location>
    </subcellularLocation>
</comment>
<comment type="tissue specificity">
    <text>Expressed by the venom gland.</text>
</comment>
<comment type="domain">
    <text evidence="6">Has the structural arrangement of an alpha-helix connected to antiparallel beta-sheets by disulfide bonds (CS-alpha/beta).</text>
</comment>
<comment type="similarity">
    <text evidence="6">Belongs to the short scorpion toxin superfamily. Potassium channel inhibitor family. Alpha-KTx 01 subfamily.</text>
</comment>
<organism>
    <name type="scientific">Hottentotta tamulus</name>
    <name type="common">Eastern Indian scorpion</name>
    <name type="synonym">Mesobuthus tamulus</name>
    <dbReference type="NCBI Taxonomy" id="34647"/>
    <lineage>
        <taxon>Eukaryota</taxon>
        <taxon>Metazoa</taxon>
        <taxon>Ecdysozoa</taxon>
        <taxon>Arthropoda</taxon>
        <taxon>Chelicerata</taxon>
        <taxon>Arachnida</taxon>
        <taxon>Scorpiones</taxon>
        <taxon>Buthida</taxon>
        <taxon>Buthoidea</taxon>
        <taxon>Buthidae</taxon>
        <taxon>Mesobuthus</taxon>
    </lineage>
</organism>
<accession>P24663</accession>
<proteinExistence type="evidence at protein level"/>
<evidence type="ECO:0000250" key="1"/>
<evidence type="ECO:0000255" key="2"/>
<evidence type="ECO:0000269" key="3">
    <source>
    </source>
</evidence>
<evidence type="ECO:0000269" key="4">
    <source>
    </source>
</evidence>
<evidence type="ECO:0000303" key="5">
    <source>
    </source>
</evidence>
<evidence type="ECO:0000305" key="6"/>
<name>KAX13_HOTTA</name>
<dbReference type="PIR" id="S32792">
    <property type="entry name" value="S32792"/>
</dbReference>
<dbReference type="SMR" id="P24663"/>
<dbReference type="GO" id="GO:0005576">
    <property type="term" value="C:extracellular region"/>
    <property type="evidence" value="ECO:0007669"/>
    <property type="project" value="UniProtKB-SubCell"/>
</dbReference>
<dbReference type="GO" id="GO:0008200">
    <property type="term" value="F:ion channel inhibitor activity"/>
    <property type="evidence" value="ECO:0007669"/>
    <property type="project" value="InterPro"/>
</dbReference>
<dbReference type="GO" id="GO:0015459">
    <property type="term" value="F:potassium channel regulator activity"/>
    <property type="evidence" value="ECO:0007669"/>
    <property type="project" value="UniProtKB-KW"/>
</dbReference>
<dbReference type="GO" id="GO:0090729">
    <property type="term" value="F:toxin activity"/>
    <property type="evidence" value="ECO:0007669"/>
    <property type="project" value="UniProtKB-KW"/>
</dbReference>
<dbReference type="Gene3D" id="3.30.30.10">
    <property type="entry name" value="Knottin, scorpion toxin-like"/>
    <property type="match status" value="1"/>
</dbReference>
<dbReference type="InterPro" id="IPR036574">
    <property type="entry name" value="Scorpion_toxin-like_sf"/>
</dbReference>
<dbReference type="InterPro" id="IPR001947">
    <property type="entry name" value="Scorpion_toxinS_K_inh"/>
</dbReference>
<dbReference type="Pfam" id="PF00451">
    <property type="entry name" value="Toxin_2"/>
    <property type="match status" value="1"/>
</dbReference>
<dbReference type="PRINTS" id="PR00286">
    <property type="entry name" value="CHARYBDTOXIN"/>
</dbReference>
<dbReference type="SUPFAM" id="SSF57095">
    <property type="entry name" value="Scorpion toxin-like"/>
    <property type="match status" value="1"/>
</dbReference>
<dbReference type="PROSITE" id="PS01138">
    <property type="entry name" value="SCORP_SHORT_TOXIN"/>
    <property type="match status" value="1"/>
</dbReference>
<protein>
    <recommendedName>
        <fullName>Potassium channel toxin alpha-KTx 1.3</fullName>
    </recommendedName>
    <alternativeName>
        <fullName evidence="5">Iberiotoxin</fullName>
        <shortName evidence="5">IbTx</shortName>
    </alternativeName>
</protein>
<reference key="1">
    <citation type="journal article" date="1990" name="J. Biol. Chem.">
        <title>Purification and characterization of a unique, potent, peptidyl probe for the high conductance calcium-activated potassium channel from venom of the scorpion Buthus tamulus.</title>
        <authorList>
            <person name="Galvez A."/>
            <person name="Gimenez-Gallego G."/>
            <person name="Reuben J.P."/>
            <person name="Roy-Contancin L."/>
            <person name="Feigenbaum P."/>
            <person name="Kaczorowski G.J."/>
            <person name="Garcia M.L."/>
        </authorList>
    </citation>
    <scope>PROTEIN SEQUENCE</scope>
    <scope>PYROGLUTAMATE FORMATION AT GLN-1</scope>
    <scope>FUNCTION</scope>
    <scope>ACTIVITY PROFILE</scope>
    <source>
        <tissue>Venom</tissue>
    </source>
</reference>
<reference key="2">
    <citation type="journal article" date="1992" name="Biochemistry">
        <title>Determination of the three-dimensional structure of iberiotoxin in solution by 1H nuclear magnetic resonance spectroscopy.</title>
        <authorList>
            <person name="Johnson B.A."/>
            <person name="Sugg E.E."/>
        </authorList>
    </citation>
    <scope>STRUCTURE BY NMR</scope>
    <scope>DISULFIDE BONDS</scope>
</reference>
<sequence length="37" mass="4254">QFTDVDCSVSKECWSVCKDLFGVDRGKCMGKKCRCYQ</sequence>